<name>RLMN_PSEP7</name>
<organism>
    <name type="scientific">Pseudomonas paraeruginosa (strain DSM 24068 / PA7)</name>
    <name type="common">Pseudomonas aeruginosa (strain PA7)</name>
    <dbReference type="NCBI Taxonomy" id="381754"/>
    <lineage>
        <taxon>Bacteria</taxon>
        <taxon>Pseudomonadati</taxon>
        <taxon>Pseudomonadota</taxon>
        <taxon>Gammaproteobacteria</taxon>
        <taxon>Pseudomonadales</taxon>
        <taxon>Pseudomonadaceae</taxon>
        <taxon>Pseudomonas</taxon>
        <taxon>Pseudomonas paraeruginosa</taxon>
    </lineage>
</organism>
<dbReference type="EC" id="2.1.1.192" evidence="1"/>
<dbReference type="EMBL" id="CP000744">
    <property type="protein sequence ID" value="ABR86312.1"/>
    <property type="molecule type" value="Genomic_DNA"/>
</dbReference>
<dbReference type="RefSeq" id="WP_012074559.1">
    <property type="nucleotide sequence ID" value="NC_009656.1"/>
</dbReference>
<dbReference type="SMR" id="A6V0V7"/>
<dbReference type="KEGG" id="pap:PSPA7_1308"/>
<dbReference type="HOGENOM" id="CLU_029101_0_0_6"/>
<dbReference type="Proteomes" id="UP000001582">
    <property type="component" value="Chromosome"/>
</dbReference>
<dbReference type="GO" id="GO:0005737">
    <property type="term" value="C:cytoplasm"/>
    <property type="evidence" value="ECO:0007669"/>
    <property type="project" value="UniProtKB-SubCell"/>
</dbReference>
<dbReference type="GO" id="GO:0051539">
    <property type="term" value="F:4 iron, 4 sulfur cluster binding"/>
    <property type="evidence" value="ECO:0007669"/>
    <property type="project" value="UniProtKB-UniRule"/>
</dbReference>
<dbReference type="GO" id="GO:0046872">
    <property type="term" value="F:metal ion binding"/>
    <property type="evidence" value="ECO:0007669"/>
    <property type="project" value="UniProtKB-KW"/>
</dbReference>
<dbReference type="GO" id="GO:0070040">
    <property type="term" value="F:rRNA (adenine(2503)-C2-)-methyltransferase activity"/>
    <property type="evidence" value="ECO:0007669"/>
    <property type="project" value="UniProtKB-UniRule"/>
</dbReference>
<dbReference type="GO" id="GO:0019843">
    <property type="term" value="F:rRNA binding"/>
    <property type="evidence" value="ECO:0007669"/>
    <property type="project" value="UniProtKB-UniRule"/>
</dbReference>
<dbReference type="GO" id="GO:0002935">
    <property type="term" value="F:tRNA (adenine(37)-C2)-methyltransferase activity"/>
    <property type="evidence" value="ECO:0007669"/>
    <property type="project" value="UniProtKB-UniRule"/>
</dbReference>
<dbReference type="GO" id="GO:0000049">
    <property type="term" value="F:tRNA binding"/>
    <property type="evidence" value="ECO:0007669"/>
    <property type="project" value="UniProtKB-UniRule"/>
</dbReference>
<dbReference type="GO" id="GO:0070475">
    <property type="term" value="P:rRNA base methylation"/>
    <property type="evidence" value="ECO:0007669"/>
    <property type="project" value="UniProtKB-UniRule"/>
</dbReference>
<dbReference type="GO" id="GO:0030488">
    <property type="term" value="P:tRNA methylation"/>
    <property type="evidence" value="ECO:0007669"/>
    <property type="project" value="UniProtKB-UniRule"/>
</dbReference>
<dbReference type="CDD" id="cd01335">
    <property type="entry name" value="Radical_SAM"/>
    <property type="match status" value="1"/>
</dbReference>
<dbReference type="FunFam" id="1.10.150.530:FF:000003">
    <property type="entry name" value="Dual-specificity RNA methyltransferase RlmN"/>
    <property type="match status" value="1"/>
</dbReference>
<dbReference type="FunFam" id="3.20.20.70:FF:000008">
    <property type="entry name" value="Dual-specificity RNA methyltransferase RlmN"/>
    <property type="match status" value="1"/>
</dbReference>
<dbReference type="Gene3D" id="1.10.150.530">
    <property type="match status" value="1"/>
</dbReference>
<dbReference type="Gene3D" id="3.20.20.70">
    <property type="entry name" value="Aldolase class I"/>
    <property type="match status" value="1"/>
</dbReference>
<dbReference type="HAMAP" id="MF_01849">
    <property type="entry name" value="RNA_methyltr_RlmN"/>
    <property type="match status" value="1"/>
</dbReference>
<dbReference type="InterPro" id="IPR013785">
    <property type="entry name" value="Aldolase_TIM"/>
</dbReference>
<dbReference type="InterPro" id="IPR040072">
    <property type="entry name" value="Methyltransferase_A"/>
</dbReference>
<dbReference type="InterPro" id="IPR048641">
    <property type="entry name" value="RlmN_N"/>
</dbReference>
<dbReference type="InterPro" id="IPR027492">
    <property type="entry name" value="RNA_MTrfase_RlmN"/>
</dbReference>
<dbReference type="InterPro" id="IPR004383">
    <property type="entry name" value="rRNA_lsu_MTrfase_RlmN/Cfr"/>
</dbReference>
<dbReference type="InterPro" id="IPR007197">
    <property type="entry name" value="rSAM"/>
</dbReference>
<dbReference type="NCBIfam" id="TIGR00048">
    <property type="entry name" value="rRNA_mod_RlmN"/>
    <property type="match status" value="1"/>
</dbReference>
<dbReference type="PANTHER" id="PTHR30544">
    <property type="entry name" value="23S RRNA METHYLTRANSFERASE"/>
    <property type="match status" value="1"/>
</dbReference>
<dbReference type="PANTHER" id="PTHR30544:SF5">
    <property type="entry name" value="RADICAL SAM CORE DOMAIN-CONTAINING PROTEIN"/>
    <property type="match status" value="1"/>
</dbReference>
<dbReference type="Pfam" id="PF04055">
    <property type="entry name" value="Radical_SAM"/>
    <property type="match status" value="1"/>
</dbReference>
<dbReference type="Pfam" id="PF21016">
    <property type="entry name" value="RlmN_N"/>
    <property type="match status" value="1"/>
</dbReference>
<dbReference type="PIRSF" id="PIRSF006004">
    <property type="entry name" value="CHP00048"/>
    <property type="match status" value="1"/>
</dbReference>
<dbReference type="SFLD" id="SFLDF00275">
    <property type="entry name" value="adenosine_C2_methyltransferase"/>
    <property type="match status" value="1"/>
</dbReference>
<dbReference type="SFLD" id="SFLDS00029">
    <property type="entry name" value="Radical_SAM"/>
    <property type="match status" value="1"/>
</dbReference>
<dbReference type="SUPFAM" id="SSF102114">
    <property type="entry name" value="Radical SAM enzymes"/>
    <property type="match status" value="1"/>
</dbReference>
<dbReference type="PROSITE" id="PS51918">
    <property type="entry name" value="RADICAL_SAM"/>
    <property type="match status" value="1"/>
</dbReference>
<accession>A6V0V7</accession>
<protein>
    <recommendedName>
        <fullName evidence="1">Dual-specificity RNA methyltransferase RlmN</fullName>
        <ecNumber evidence="1">2.1.1.192</ecNumber>
    </recommendedName>
    <alternativeName>
        <fullName evidence="1">23S rRNA (adenine(2503)-C(2))-methyltransferase</fullName>
    </alternativeName>
    <alternativeName>
        <fullName evidence="1">23S rRNA m2A2503 methyltransferase</fullName>
    </alternativeName>
    <alternativeName>
        <fullName evidence="1">Ribosomal RNA large subunit methyltransferase N</fullName>
    </alternativeName>
    <alternativeName>
        <fullName evidence="1">tRNA (adenine(37)-C(2))-methyltransferase</fullName>
    </alternativeName>
    <alternativeName>
        <fullName evidence="1">tRNA m2A37 methyltransferase</fullName>
    </alternativeName>
</protein>
<gene>
    <name evidence="1" type="primary">rlmN</name>
    <name type="ordered locus">PSPA7_1308</name>
</gene>
<evidence type="ECO:0000255" key="1">
    <source>
        <dbReference type="HAMAP-Rule" id="MF_01849"/>
    </source>
</evidence>
<evidence type="ECO:0000255" key="2">
    <source>
        <dbReference type="PROSITE-ProRule" id="PRU01266"/>
    </source>
</evidence>
<comment type="function">
    <text evidence="1">Specifically methylates position 2 of adenine 2503 in 23S rRNA and position 2 of adenine 37 in tRNAs. m2A2503 modification seems to play a crucial role in the proofreading step occurring at the peptidyl transferase center and thus would serve to optimize ribosomal fidelity.</text>
</comment>
<comment type="catalytic activity">
    <reaction evidence="1">
        <text>adenosine(2503) in 23S rRNA + 2 reduced [2Fe-2S]-[ferredoxin] + 2 S-adenosyl-L-methionine = 2-methyladenosine(2503) in 23S rRNA + 5'-deoxyadenosine + L-methionine + 2 oxidized [2Fe-2S]-[ferredoxin] + S-adenosyl-L-homocysteine</text>
        <dbReference type="Rhea" id="RHEA:42916"/>
        <dbReference type="Rhea" id="RHEA-COMP:10000"/>
        <dbReference type="Rhea" id="RHEA-COMP:10001"/>
        <dbReference type="Rhea" id="RHEA-COMP:10152"/>
        <dbReference type="Rhea" id="RHEA-COMP:10282"/>
        <dbReference type="ChEBI" id="CHEBI:17319"/>
        <dbReference type="ChEBI" id="CHEBI:33737"/>
        <dbReference type="ChEBI" id="CHEBI:33738"/>
        <dbReference type="ChEBI" id="CHEBI:57844"/>
        <dbReference type="ChEBI" id="CHEBI:57856"/>
        <dbReference type="ChEBI" id="CHEBI:59789"/>
        <dbReference type="ChEBI" id="CHEBI:74411"/>
        <dbReference type="ChEBI" id="CHEBI:74497"/>
        <dbReference type="EC" id="2.1.1.192"/>
    </reaction>
</comment>
<comment type="catalytic activity">
    <reaction evidence="1">
        <text>adenosine(37) in tRNA + 2 reduced [2Fe-2S]-[ferredoxin] + 2 S-adenosyl-L-methionine = 2-methyladenosine(37) in tRNA + 5'-deoxyadenosine + L-methionine + 2 oxidized [2Fe-2S]-[ferredoxin] + S-adenosyl-L-homocysteine</text>
        <dbReference type="Rhea" id="RHEA:43332"/>
        <dbReference type="Rhea" id="RHEA-COMP:10000"/>
        <dbReference type="Rhea" id="RHEA-COMP:10001"/>
        <dbReference type="Rhea" id="RHEA-COMP:10162"/>
        <dbReference type="Rhea" id="RHEA-COMP:10485"/>
        <dbReference type="ChEBI" id="CHEBI:17319"/>
        <dbReference type="ChEBI" id="CHEBI:33737"/>
        <dbReference type="ChEBI" id="CHEBI:33738"/>
        <dbReference type="ChEBI" id="CHEBI:57844"/>
        <dbReference type="ChEBI" id="CHEBI:57856"/>
        <dbReference type="ChEBI" id="CHEBI:59789"/>
        <dbReference type="ChEBI" id="CHEBI:74411"/>
        <dbReference type="ChEBI" id="CHEBI:74497"/>
        <dbReference type="EC" id="2.1.1.192"/>
    </reaction>
</comment>
<comment type="cofactor">
    <cofactor evidence="1">
        <name>[4Fe-4S] cluster</name>
        <dbReference type="ChEBI" id="CHEBI:49883"/>
    </cofactor>
    <text evidence="1">Binds 1 [4Fe-4S] cluster. The cluster is coordinated with 3 cysteines and an exchangeable S-adenosyl-L-methionine.</text>
</comment>
<comment type="subcellular location">
    <subcellularLocation>
        <location evidence="1">Cytoplasm</location>
    </subcellularLocation>
</comment>
<comment type="miscellaneous">
    <text evidence="1">Reaction proceeds by a ping-pong mechanism involving intermediate methylation of a conserved cysteine residue.</text>
</comment>
<comment type="similarity">
    <text evidence="1">Belongs to the radical SAM superfamily. RlmN family.</text>
</comment>
<feature type="chain" id="PRO_0000350331" description="Dual-specificity RNA methyltransferase RlmN">
    <location>
        <begin position="1"/>
        <end position="378"/>
    </location>
</feature>
<feature type="domain" description="Radical SAM core" evidence="2">
    <location>
        <begin position="102"/>
        <end position="342"/>
    </location>
</feature>
<feature type="active site" description="Proton acceptor" evidence="1">
    <location>
        <position position="96"/>
    </location>
</feature>
<feature type="active site" description="S-methylcysteine intermediate" evidence="1">
    <location>
        <position position="345"/>
    </location>
</feature>
<feature type="binding site" evidence="1">
    <location>
        <position position="116"/>
    </location>
    <ligand>
        <name>[4Fe-4S] cluster</name>
        <dbReference type="ChEBI" id="CHEBI:49883"/>
        <note>4Fe-4S-S-AdoMet</note>
    </ligand>
</feature>
<feature type="binding site" evidence="1">
    <location>
        <position position="120"/>
    </location>
    <ligand>
        <name>[4Fe-4S] cluster</name>
        <dbReference type="ChEBI" id="CHEBI:49883"/>
        <note>4Fe-4S-S-AdoMet</note>
    </ligand>
</feature>
<feature type="binding site" evidence="1">
    <location>
        <position position="123"/>
    </location>
    <ligand>
        <name>[4Fe-4S] cluster</name>
        <dbReference type="ChEBI" id="CHEBI:49883"/>
        <note>4Fe-4S-S-AdoMet</note>
    </ligand>
</feature>
<feature type="binding site" evidence="1">
    <location>
        <begin position="170"/>
        <end position="171"/>
    </location>
    <ligand>
        <name>S-adenosyl-L-methionine</name>
        <dbReference type="ChEBI" id="CHEBI:59789"/>
    </ligand>
</feature>
<feature type="binding site" evidence="1">
    <location>
        <position position="202"/>
    </location>
    <ligand>
        <name>S-adenosyl-L-methionine</name>
        <dbReference type="ChEBI" id="CHEBI:59789"/>
    </ligand>
</feature>
<feature type="binding site" evidence="1">
    <location>
        <begin position="224"/>
        <end position="226"/>
    </location>
    <ligand>
        <name>S-adenosyl-L-methionine</name>
        <dbReference type="ChEBI" id="CHEBI:59789"/>
    </ligand>
</feature>
<feature type="binding site" evidence="1">
    <location>
        <position position="302"/>
    </location>
    <ligand>
        <name>S-adenosyl-L-methionine</name>
        <dbReference type="ChEBI" id="CHEBI:59789"/>
    </ligand>
</feature>
<feature type="disulfide bond" description="(transient)" evidence="1">
    <location>
        <begin position="109"/>
        <end position="345"/>
    </location>
</feature>
<reference key="1">
    <citation type="submission" date="2007-06" db="EMBL/GenBank/DDBJ databases">
        <authorList>
            <person name="Dodson R.J."/>
            <person name="Harkins D."/>
            <person name="Paulsen I.T."/>
        </authorList>
    </citation>
    <scope>NUCLEOTIDE SEQUENCE [LARGE SCALE GENOMIC DNA]</scope>
    <source>
        <strain>DSM 24068 / PA7</strain>
    </source>
</reference>
<proteinExistence type="inferred from homology"/>
<sequence length="378" mass="41699">MTTATGKVNLLGLTQPQLEQFFESIGEKRFRAGQVMKWIHHFGVDDFDAMTNVGKALREKLKAFAEIRGPEIVSQDISADGTRKWVVRVASGSCVETVYIPQGGRGTLCVSSQAGCALDCSFCSTGKQGFNSDLSAAEVIGQVWIANKSFGTVPAKIDRAITNVVMMGMGEPLLNFDNVVAAMNIMMDDLGYGISKRKVTLSTSGVVPMIDKLGEVIDVSLALSLHAPNDELRNRLVPINKKYPLTMLLDACRRYISRLGEKRVLTVEYTLLKDVNDQPEHAEQMIALLKDTPCKINLIPFNPFPHSGYERPSNNAIRRFQDLLHKGGFNVTVRTTRGDDIDAACGQLVGQVMDRTRRSERYIAVRQLAESESAANRN</sequence>
<keyword id="KW-0004">4Fe-4S</keyword>
<keyword id="KW-0963">Cytoplasm</keyword>
<keyword id="KW-1015">Disulfide bond</keyword>
<keyword id="KW-0408">Iron</keyword>
<keyword id="KW-0411">Iron-sulfur</keyword>
<keyword id="KW-0479">Metal-binding</keyword>
<keyword id="KW-0489">Methyltransferase</keyword>
<keyword id="KW-0698">rRNA processing</keyword>
<keyword id="KW-0949">S-adenosyl-L-methionine</keyword>
<keyword id="KW-0808">Transferase</keyword>
<keyword id="KW-0819">tRNA processing</keyword>